<reference evidence="5" key="1">
    <citation type="journal article" date="2002" name="Nature">
        <title>The genome sequence of Schizosaccharomyces pombe.</title>
        <authorList>
            <person name="Wood V."/>
            <person name="Gwilliam R."/>
            <person name="Rajandream M.A."/>
            <person name="Lyne M.H."/>
            <person name="Lyne R."/>
            <person name="Stewart A."/>
            <person name="Sgouros J.G."/>
            <person name="Peat N."/>
            <person name="Hayles J."/>
            <person name="Baker S.G."/>
            <person name="Basham D."/>
            <person name="Bowman S."/>
            <person name="Brooks K."/>
            <person name="Brown D."/>
            <person name="Brown S."/>
            <person name="Chillingworth T."/>
            <person name="Churcher C.M."/>
            <person name="Collins M."/>
            <person name="Connor R."/>
            <person name="Cronin A."/>
            <person name="Davis P."/>
            <person name="Feltwell T."/>
            <person name="Fraser A."/>
            <person name="Gentles S."/>
            <person name="Goble A."/>
            <person name="Hamlin N."/>
            <person name="Harris D.E."/>
            <person name="Hidalgo J."/>
            <person name="Hodgson G."/>
            <person name="Holroyd S."/>
            <person name="Hornsby T."/>
            <person name="Howarth S."/>
            <person name="Huckle E.J."/>
            <person name="Hunt S."/>
            <person name="Jagels K."/>
            <person name="James K.D."/>
            <person name="Jones L."/>
            <person name="Jones M."/>
            <person name="Leather S."/>
            <person name="McDonald S."/>
            <person name="McLean J."/>
            <person name="Mooney P."/>
            <person name="Moule S."/>
            <person name="Mungall K.L."/>
            <person name="Murphy L.D."/>
            <person name="Niblett D."/>
            <person name="Odell C."/>
            <person name="Oliver K."/>
            <person name="O'Neil S."/>
            <person name="Pearson D."/>
            <person name="Quail M.A."/>
            <person name="Rabbinowitsch E."/>
            <person name="Rutherford K.M."/>
            <person name="Rutter S."/>
            <person name="Saunders D."/>
            <person name="Seeger K."/>
            <person name="Sharp S."/>
            <person name="Skelton J."/>
            <person name="Simmonds M.N."/>
            <person name="Squares R."/>
            <person name="Squares S."/>
            <person name="Stevens K."/>
            <person name="Taylor K."/>
            <person name="Taylor R.G."/>
            <person name="Tivey A."/>
            <person name="Walsh S.V."/>
            <person name="Warren T."/>
            <person name="Whitehead S."/>
            <person name="Woodward J.R."/>
            <person name="Volckaert G."/>
            <person name="Aert R."/>
            <person name="Robben J."/>
            <person name="Grymonprez B."/>
            <person name="Weltjens I."/>
            <person name="Vanstreels E."/>
            <person name="Rieger M."/>
            <person name="Schaefer M."/>
            <person name="Mueller-Auer S."/>
            <person name="Gabel C."/>
            <person name="Fuchs M."/>
            <person name="Duesterhoeft A."/>
            <person name="Fritzc C."/>
            <person name="Holzer E."/>
            <person name="Moestl D."/>
            <person name="Hilbert H."/>
            <person name="Borzym K."/>
            <person name="Langer I."/>
            <person name="Beck A."/>
            <person name="Lehrach H."/>
            <person name="Reinhardt R."/>
            <person name="Pohl T.M."/>
            <person name="Eger P."/>
            <person name="Zimmermann W."/>
            <person name="Wedler H."/>
            <person name="Wambutt R."/>
            <person name="Purnelle B."/>
            <person name="Goffeau A."/>
            <person name="Cadieu E."/>
            <person name="Dreano S."/>
            <person name="Gloux S."/>
            <person name="Lelaure V."/>
            <person name="Mottier S."/>
            <person name="Galibert F."/>
            <person name="Aves S.J."/>
            <person name="Xiang Z."/>
            <person name="Hunt C."/>
            <person name="Moore K."/>
            <person name="Hurst S.M."/>
            <person name="Lucas M."/>
            <person name="Rochet M."/>
            <person name="Gaillardin C."/>
            <person name="Tallada V.A."/>
            <person name="Garzon A."/>
            <person name="Thode G."/>
            <person name="Daga R.R."/>
            <person name="Cruzado L."/>
            <person name="Jimenez J."/>
            <person name="Sanchez M."/>
            <person name="del Rey F."/>
            <person name="Benito J."/>
            <person name="Dominguez A."/>
            <person name="Revuelta J.L."/>
            <person name="Moreno S."/>
            <person name="Armstrong J."/>
            <person name="Forsburg S.L."/>
            <person name="Cerutti L."/>
            <person name="Lowe T."/>
            <person name="McCombie W.R."/>
            <person name="Paulsen I."/>
            <person name="Potashkin J."/>
            <person name="Shpakovski G.V."/>
            <person name="Ussery D."/>
            <person name="Barrell B.G."/>
            <person name="Nurse P."/>
        </authorList>
    </citation>
    <scope>NUCLEOTIDE SEQUENCE [LARGE SCALE GENOMIC DNA]</scope>
    <source>
        <strain>972 / ATCC 24843</strain>
    </source>
</reference>
<reference evidence="4" key="2">
    <citation type="journal article" date="2006" name="Nat. Biotechnol.">
        <title>ORFeome cloning and global analysis of protein localization in the fission yeast Schizosaccharomyces pombe.</title>
        <authorList>
            <person name="Matsuyama A."/>
            <person name="Arai R."/>
            <person name="Yashiroda Y."/>
            <person name="Shirai A."/>
            <person name="Kamata A."/>
            <person name="Sekido S."/>
            <person name="Kobayashi Y."/>
            <person name="Hashimoto A."/>
            <person name="Hamamoto M."/>
            <person name="Hiraoka Y."/>
            <person name="Horinouchi S."/>
            <person name="Yoshida M."/>
        </authorList>
    </citation>
    <scope>SUBCELLULAR LOCATION [LARGE SCALE ANALYSIS]</scope>
</reference>
<feature type="chain" id="PRO_0000363356" description="Uncharacterized protein C140.04">
    <location>
        <begin position="1"/>
        <end position="295"/>
    </location>
</feature>
<feature type="region of interest" description="Disordered" evidence="2">
    <location>
        <begin position="57"/>
        <end position="94"/>
    </location>
</feature>
<feature type="coiled-coil region" evidence="1">
    <location>
        <begin position="87"/>
        <end position="116"/>
    </location>
</feature>
<feature type="coiled-coil region" evidence="1">
    <location>
        <begin position="259"/>
        <end position="286"/>
    </location>
</feature>
<feature type="compositionally biased region" description="Basic residues" evidence="2">
    <location>
        <begin position="57"/>
        <end position="67"/>
    </location>
</feature>
<feature type="compositionally biased region" description="Basic and acidic residues" evidence="2">
    <location>
        <begin position="79"/>
        <end position="88"/>
    </location>
</feature>
<proteinExistence type="evidence at protein level"/>
<organism>
    <name type="scientific">Schizosaccharomyces pombe (strain 972 / ATCC 24843)</name>
    <name type="common">Fission yeast</name>
    <dbReference type="NCBI Taxonomy" id="284812"/>
    <lineage>
        <taxon>Eukaryota</taxon>
        <taxon>Fungi</taxon>
        <taxon>Dikarya</taxon>
        <taxon>Ascomycota</taxon>
        <taxon>Taphrinomycotina</taxon>
        <taxon>Schizosaccharomycetes</taxon>
        <taxon>Schizosaccharomycetales</taxon>
        <taxon>Schizosaccharomycetaceae</taxon>
        <taxon>Schizosaccharomyces</taxon>
    </lineage>
</organism>
<accession>Q9P7B7</accession>
<dbReference type="EMBL" id="CU329670">
    <property type="protein sequence ID" value="CAB86415.1"/>
    <property type="molecule type" value="Genomic_DNA"/>
</dbReference>
<dbReference type="SMR" id="Q9P7B7"/>
<dbReference type="BioGRID" id="279283">
    <property type="interactions" value="18"/>
</dbReference>
<dbReference type="FunCoup" id="Q9P7B7">
    <property type="interactions" value="581"/>
</dbReference>
<dbReference type="IntAct" id="Q9P7B7">
    <property type="interactions" value="10"/>
</dbReference>
<dbReference type="STRING" id="284812.Q9P7B7"/>
<dbReference type="PaxDb" id="4896-SPAC140.04.1"/>
<dbReference type="EnsemblFungi" id="SPAC140.04.1">
    <property type="protein sequence ID" value="SPAC140.04.1:pep"/>
    <property type="gene ID" value="SPAC140.04"/>
</dbReference>
<dbReference type="KEGG" id="spo:2542837"/>
<dbReference type="PomBase" id="SPAC140.04"/>
<dbReference type="VEuPathDB" id="FungiDB:SPAC140.04"/>
<dbReference type="eggNOG" id="ENOG502S3J6">
    <property type="taxonomic scope" value="Eukaryota"/>
</dbReference>
<dbReference type="HOGENOM" id="CLU_947162_0_0_1"/>
<dbReference type="InParanoid" id="Q9P7B7"/>
<dbReference type="OMA" id="QQAVHYD"/>
<dbReference type="PhylomeDB" id="Q9P7B7"/>
<dbReference type="PRO" id="PR:Q9P7B7"/>
<dbReference type="Proteomes" id="UP000002485">
    <property type="component" value="Chromosome I"/>
</dbReference>
<dbReference type="GO" id="GO:0005634">
    <property type="term" value="C:nucleus"/>
    <property type="evidence" value="ECO:0007005"/>
    <property type="project" value="PomBase"/>
</dbReference>
<dbReference type="GO" id="GO:0180035">
    <property type="term" value="P:lncRNA processing"/>
    <property type="evidence" value="ECO:0000315"/>
    <property type="project" value="PomBase"/>
</dbReference>
<dbReference type="GO" id="GO:0071030">
    <property type="term" value="P:nuclear mRNA surveillance of spliceosomal pre-mRNA splicing"/>
    <property type="evidence" value="ECO:0000315"/>
    <property type="project" value="PomBase"/>
</dbReference>
<dbReference type="InterPro" id="IPR025066">
    <property type="entry name" value="CCDC174-like"/>
</dbReference>
<dbReference type="PANTHER" id="PTHR15885">
    <property type="entry name" value="COILED-COIL DOMAIN-CONTAINING PROTEIN 174"/>
    <property type="match status" value="1"/>
</dbReference>
<dbReference type="PANTHER" id="PTHR15885:SF1">
    <property type="entry name" value="COILED-COIL DOMAIN-CONTAINING PROTEIN 174"/>
    <property type="match status" value="1"/>
</dbReference>
<dbReference type="Pfam" id="PF13300">
    <property type="entry name" value="DUF4078"/>
    <property type="match status" value="1"/>
</dbReference>
<name>YK24_SCHPO</name>
<comment type="interaction">
    <interactant intactId="EBI-9002253">
        <id>Q9P7B7</id>
    </interactant>
    <interactant intactId="EBI-8993901">
        <id>O13799</id>
        <label>SPAC17H9.02</label>
    </interactant>
    <organismsDiffer>false</organismsDiffer>
    <experiments>3</experiments>
</comment>
<comment type="subcellular location">
    <subcellularLocation>
        <location evidence="3">Nucleus</location>
    </subcellularLocation>
</comment>
<evidence type="ECO:0000255" key="1"/>
<evidence type="ECO:0000256" key="2">
    <source>
        <dbReference type="SAM" id="MobiDB-lite"/>
    </source>
</evidence>
<evidence type="ECO:0000269" key="3">
    <source>
    </source>
</evidence>
<evidence type="ECO:0000305" key="4"/>
<evidence type="ECO:0000312" key="5">
    <source>
        <dbReference type="EMBL" id="CAB86415.1"/>
    </source>
</evidence>
<keyword id="KW-0175">Coiled coil</keyword>
<keyword id="KW-0539">Nucleus</keyword>
<keyword id="KW-1185">Reference proteome</keyword>
<protein>
    <recommendedName>
        <fullName>Uncharacterized protein C140.04</fullName>
    </recommendedName>
</protein>
<sequence length="295" mass="35323">MNVGKKSEIQVSAKSNLNFLNELIEEKKRYEDEKRKISHQKYTDKLLEANDNETTKRKLLVKQKRKSNKEFQSNIIKKRKDEERKGTLKTEQANEEELLQRSRLELERKAKKYDQYAAGELEIKETEDDGILVDFTRKWAEEAPENETVEITDEFGRTRSVSIYETGNTLLSQKEEYKPEKPIYGDYMPSFEVDEEKVQKLWKEDEQQAVHYDSTKEVRNKGTAFYQFSFDEKEREEQLLSLKEIHAKVTQQQRKNTEDVLTLRDKKLEERRKFLERDYAIKLGERWMSEHFSNN</sequence>
<gene>
    <name type="ORF">SPAC140.04</name>
</gene>